<comment type="function">
    <text evidence="4">Putative aldehyde dehydrogenase; part of the gene cluster that mediates the biosynthesis of the mycotoxin fusarin C (PubMed:23932525). Within the cluster, FUS1, FUS2, FUS8 and FUS9 are sufficient for fusarin production (PubMed:23932525). The other FUS cluster members are not essential for fusarin C biosynthesis (PubMed:23932525).</text>
</comment>
<comment type="catalytic activity">
    <reaction evidence="1">
        <text>an aldehyde + NAD(+) + H2O = a carboxylate + NADH + 2 H(+)</text>
        <dbReference type="Rhea" id="RHEA:16185"/>
        <dbReference type="ChEBI" id="CHEBI:15377"/>
        <dbReference type="ChEBI" id="CHEBI:15378"/>
        <dbReference type="ChEBI" id="CHEBI:17478"/>
        <dbReference type="ChEBI" id="CHEBI:29067"/>
        <dbReference type="ChEBI" id="CHEBI:57540"/>
        <dbReference type="ChEBI" id="CHEBI:57945"/>
        <dbReference type="EC" id="1.2.1.3"/>
    </reaction>
</comment>
<comment type="induction">
    <text evidence="3 4">Expressed under high amounts of nitrogen via regulation by GLN1 (PubMed:23932525). Moreover, components of the fungal-specific velvet complex VEL1, VEL2 and LAE1 act also as positive regulators of expression (PubMed:20572938, PubMed:23932525). Finally, expression is induced under acidic conditions in a PACC-independent manner (PubMed:23932525).</text>
</comment>
<comment type="disruption phenotype">
    <text evidence="4">Does not alter fusarin C production (PubMed:23932525).</text>
</comment>
<comment type="similarity">
    <text evidence="6">Belongs to the aldehyde dehydrogenase family.</text>
</comment>
<proteinExistence type="evidence at transcript level"/>
<accession>S0ENH1</accession>
<evidence type="ECO:0000250" key="1">
    <source>
        <dbReference type="UniProtKB" id="O34660"/>
    </source>
</evidence>
<evidence type="ECO:0000255" key="2">
    <source>
        <dbReference type="PROSITE-ProRule" id="PRU10007"/>
    </source>
</evidence>
<evidence type="ECO:0000269" key="3">
    <source>
    </source>
</evidence>
<evidence type="ECO:0000269" key="4">
    <source>
    </source>
</evidence>
<evidence type="ECO:0000303" key="5">
    <source>
    </source>
</evidence>
<evidence type="ECO:0000305" key="6"/>
<gene>
    <name evidence="5" type="primary">FUS7</name>
    <name type="ORF">FFUJ_10052</name>
</gene>
<organism>
    <name type="scientific">Gibberella fujikuroi (strain CBS 195.34 / IMI 58289 / NRRL A-6831)</name>
    <name type="common">Bakanae and foot rot disease fungus</name>
    <name type="synonym">Fusarium fujikuroi</name>
    <dbReference type="NCBI Taxonomy" id="1279085"/>
    <lineage>
        <taxon>Eukaryota</taxon>
        <taxon>Fungi</taxon>
        <taxon>Dikarya</taxon>
        <taxon>Ascomycota</taxon>
        <taxon>Pezizomycotina</taxon>
        <taxon>Sordariomycetes</taxon>
        <taxon>Hypocreomycetidae</taxon>
        <taxon>Hypocreales</taxon>
        <taxon>Nectriaceae</taxon>
        <taxon>Fusarium</taxon>
        <taxon>Fusarium fujikuroi species complex</taxon>
    </lineage>
</organism>
<sequence length="461" mass="49998">MSFDTFYNIITGQPRSARETTSGVNPLDRSSLWPAPVATGNDVEEAVRSAQEAFPAWSEKTYKQRTELLEKFADLYLVHANEFCQLIATECGRTAGNAAIEVYVAAQWLRYPSKYEIPEEVTEDEKKTSIVTHEPLGVVAAICPWNFPLMLALGKIAPALATGNCVILKPSPFTPYSSLKLVELAQQVFPPSVLQVLHGHDDLGPMLVKHPRIQKITFTGSTTTGKQILRDAAETMKRVTLETAGNNASIILPDVNIEAVIPQLAGGLWFNAGQVCIATRRMYIHQDIFDEAVAQLAEASKDLASGMEPIQNEMQLVRLQQALSDANAAGCELLSLGKTEAAEGFFIQPTILKSPPPDADVVQQENFGPIVSCIKFSSLDEAISLANNSDTGLAASVWSSDVSAARRVAAKLEVGNVYINGPPQPDPYVPFGGHKQSGLGVEYGLPGLLSFCQTKSTYLYK</sequence>
<feature type="chain" id="PRO_0000437365" description="Putative aldehyde dehydrogenase FUS7">
    <location>
        <begin position="1"/>
        <end position="461"/>
    </location>
</feature>
<feature type="active site" evidence="2">
    <location>
        <position position="242"/>
    </location>
</feature>
<feature type="active site" evidence="2">
    <location>
        <position position="276"/>
    </location>
</feature>
<feature type="binding site" evidence="1">
    <location>
        <begin position="220"/>
        <end position="225"/>
    </location>
    <ligand>
        <name>NAD(+)</name>
        <dbReference type="ChEBI" id="CHEBI:57540"/>
    </ligand>
</feature>
<reference key="1">
    <citation type="journal article" date="2013" name="PLoS Pathog.">
        <title>Deciphering the cryptic genome: genome-wide analyses of the rice pathogen Fusarium fujikuroi reveal complex regulation of secondary metabolism and novel metabolites.</title>
        <authorList>
            <person name="Wiemann P."/>
            <person name="Sieber C.M.K."/>
            <person name="von Bargen K.W."/>
            <person name="Studt L."/>
            <person name="Niehaus E.-M."/>
            <person name="Espino J.J."/>
            <person name="Huss K."/>
            <person name="Michielse C.B."/>
            <person name="Albermann S."/>
            <person name="Wagner D."/>
            <person name="Bergner S.V."/>
            <person name="Connolly L.R."/>
            <person name="Fischer A."/>
            <person name="Reuter G."/>
            <person name="Kleigrewe K."/>
            <person name="Bald T."/>
            <person name="Wingfield B.D."/>
            <person name="Ophir R."/>
            <person name="Freeman S."/>
            <person name="Hippler M."/>
            <person name="Smith K.M."/>
            <person name="Brown D.W."/>
            <person name="Proctor R.H."/>
            <person name="Muensterkoetter M."/>
            <person name="Freitag M."/>
            <person name="Humpf H.-U."/>
            <person name="Gueldener U."/>
            <person name="Tudzynski B."/>
        </authorList>
    </citation>
    <scope>NUCLEOTIDE SEQUENCE [LARGE SCALE GENOMIC DNA]</scope>
    <source>
        <strain>CBS 195.34 / IMI 58289 / NRRL A-6831</strain>
    </source>
</reference>
<reference key="2">
    <citation type="journal article" date="2010" name="Mol. Microbiol.">
        <title>FfVel1 and FfLae1, components of a velvet-like complex in Fusarium fujikuroi, affect differentiation, secondary metabolism and virulence.</title>
        <authorList>
            <person name="Wiemann P."/>
            <person name="Brown D.W."/>
            <person name="Kleigrewe K."/>
            <person name="Bok J.W."/>
            <person name="Keller N.P."/>
            <person name="Humpf H.U."/>
            <person name="Tudzynski B."/>
        </authorList>
    </citation>
    <scope>INDUCTION</scope>
</reference>
<reference key="3">
    <citation type="journal article" date="2013" name="Chem. Biol.">
        <title>Genetic manipulation of the Fusarium fujikuroi fusarin gene cluster yields insight into the complex regulation and fusarin biosynthetic pathway.</title>
        <authorList>
            <person name="Niehaus E.M."/>
            <person name="Kleigrewe K."/>
            <person name="Wiemann P."/>
            <person name="Studt L."/>
            <person name="Sieber C.M."/>
            <person name="Connolly L.R."/>
            <person name="Freitag M."/>
            <person name="Gueldener U."/>
            <person name="Tudzynski B."/>
            <person name="Humpf H.U."/>
        </authorList>
    </citation>
    <scope>FUNCTION</scope>
    <scope>INDUCTION</scope>
    <scope>DISRUPTION PHENOTYPE</scope>
</reference>
<protein>
    <recommendedName>
        <fullName evidence="1">Putative aldehyde dehydrogenase FUS7</fullName>
        <ecNumber evidence="1">1.2.1.3</ecNumber>
    </recommendedName>
    <alternativeName>
        <fullName evidence="5">Fusarin biosynthesis protein 7</fullName>
    </alternativeName>
</protein>
<name>FUS7_GIBF5</name>
<dbReference type="EC" id="1.2.1.3" evidence="1"/>
<dbReference type="EMBL" id="HF679031">
    <property type="protein sequence ID" value="CCT74093.1"/>
    <property type="molecule type" value="Genomic_DNA"/>
</dbReference>
<dbReference type="SMR" id="S0ENH1"/>
<dbReference type="STRING" id="1279085.S0ENH1"/>
<dbReference type="EnsemblFungi" id="CCT74093">
    <property type="protein sequence ID" value="CCT74093"/>
    <property type="gene ID" value="FFUJ_10052"/>
</dbReference>
<dbReference type="VEuPathDB" id="FungiDB:FFUJ_10052"/>
<dbReference type="HOGENOM" id="CLU_005391_0_0_1"/>
<dbReference type="Proteomes" id="UP000016800">
    <property type="component" value="Chromosome 9"/>
</dbReference>
<dbReference type="GO" id="GO:0004029">
    <property type="term" value="F:aldehyde dehydrogenase (NAD+) activity"/>
    <property type="evidence" value="ECO:0007669"/>
    <property type="project" value="UniProtKB-EC"/>
</dbReference>
<dbReference type="CDD" id="cd07106">
    <property type="entry name" value="ALDH_AldA-AAD23400"/>
    <property type="match status" value="1"/>
</dbReference>
<dbReference type="FunFam" id="3.40.605.10:FF:000007">
    <property type="entry name" value="NAD/NADP-dependent betaine aldehyde dehydrogenase"/>
    <property type="match status" value="1"/>
</dbReference>
<dbReference type="Gene3D" id="3.40.605.10">
    <property type="entry name" value="Aldehyde Dehydrogenase, Chain A, domain 1"/>
    <property type="match status" value="1"/>
</dbReference>
<dbReference type="Gene3D" id="3.40.309.10">
    <property type="entry name" value="Aldehyde Dehydrogenase, Chain A, domain 2"/>
    <property type="match status" value="1"/>
</dbReference>
<dbReference type="InterPro" id="IPR016161">
    <property type="entry name" value="Ald_DH/histidinol_DH"/>
</dbReference>
<dbReference type="InterPro" id="IPR016163">
    <property type="entry name" value="Ald_DH_C"/>
</dbReference>
<dbReference type="InterPro" id="IPR016162">
    <property type="entry name" value="Ald_DH_N"/>
</dbReference>
<dbReference type="InterPro" id="IPR015590">
    <property type="entry name" value="Aldehyde_DH_dom"/>
</dbReference>
<dbReference type="InterPro" id="IPR044086">
    <property type="entry name" value="LUC3-like"/>
</dbReference>
<dbReference type="PANTHER" id="PTHR11699">
    <property type="entry name" value="ALDEHYDE DEHYDROGENASE-RELATED"/>
    <property type="match status" value="1"/>
</dbReference>
<dbReference type="Pfam" id="PF00171">
    <property type="entry name" value="Aldedh"/>
    <property type="match status" value="1"/>
</dbReference>
<dbReference type="SUPFAM" id="SSF53720">
    <property type="entry name" value="ALDH-like"/>
    <property type="match status" value="1"/>
</dbReference>
<keyword id="KW-0520">NAD</keyword>
<keyword id="KW-0560">Oxidoreductase</keyword>
<keyword id="KW-1185">Reference proteome</keyword>